<proteinExistence type="inferred from homology"/>
<protein>
    <recommendedName>
        <fullName evidence="1">Queuine tRNA-ribosyltransferase</fullName>
        <ecNumber evidence="1">2.4.2.29</ecNumber>
    </recommendedName>
    <alternativeName>
        <fullName evidence="1">Guanine insertion enzyme</fullName>
    </alternativeName>
    <alternativeName>
        <fullName evidence="1">tRNA-guanine transglycosylase</fullName>
    </alternativeName>
</protein>
<gene>
    <name evidence="1" type="primary">tgt</name>
    <name type="ordered locus">SACOL1694</name>
</gene>
<accession>Q5HFC4</accession>
<sequence length="379" mass="43310">MPAVTYEHIKTCKQSGARLGIVHTPHGSFETPMFMPVGTKATVKTMSPEELRQIEAKIILGNTYHLWLQPGNDIIKHAGGLHKFMNWDGPILTDSGGFQVFSLSNLRKITEEGVEFRHHTNGSKLFLSPEKSMQIQNDLGSDIMMAFDECPPMPAEYDYVKKSIERTTRWAKRCLDAHQRPEDQALFGIIQGGEYEDLREQSAKDLVELDFPGYAIGGLSVGEPKPVMYKMVEHTEQFMPKDKPRYLMGVGSPDALIECSIRGMDMFDCVLPTRIARNGTCMTSQGRLVIKNAKFADDLRPLDENCDCYTCQNYSRAYIRHLIKAEETFGIRLTTIHNLHFLLKLMEDIRQAIREDRLLDFKEEFFEQYGLNVENPKNF</sequence>
<name>TGT_STAAC</name>
<comment type="function">
    <text evidence="1">Catalyzes the base-exchange of a guanine (G) residue with the queuine precursor 7-aminomethyl-7-deazaguanine (PreQ1) at position 34 (anticodon wobble position) in tRNAs with GU(N) anticodons (tRNA-Asp, -Asn, -His and -Tyr). Catalysis occurs through a double-displacement mechanism. The nucleophile active site attacks the C1' of nucleotide 34 to detach the guanine base from the RNA, forming a covalent enzyme-RNA intermediate. The proton acceptor active site deprotonates the incoming PreQ1, allowing a nucleophilic attack on the C1' of the ribose to form the product. After dissociation, two additional enzymatic reactions on the tRNA convert PreQ1 to queuine (Q), resulting in the hypermodified nucleoside queuosine (7-(((4,5-cis-dihydroxy-2-cyclopenten-1-yl)amino)methyl)-7-deazaguanosine).</text>
</comment>
<comment type="catalytic activity">
    <reaction evidence="1">
        <text>7-aminomethyl-7-carbaguanine + guanosine(34) in tRNA = 7-aminomethyl-7-carbaguanosine(34) in tRNA + guanine</text>
        <dbReference type="Rhea" id="RHEA:24104"/>
        <dbReference type="Rhea" id="RHEA-COMP:10341"/>
        <dbReference type="Rhea" id="RHEA-COMP:10342"/>
        <dbReference type="ChEBI" id="CHEBI:16235"/>
        <dbReference type="ChEBI" id="CHEBI:58703"/>
        <dbReference type="ChEBI" id="CHEBI:74269"/>
        <dbReference type="ChEBI" id="CHEBI:82833"/>
        <dbReference type="EC" id="2.4.2.29"/>
    </reaction>
</comment>
<comment type="cofactor">
    <cofactor evidence="1">
        <name>Zn(2+)</name>
        <dbReference type="ChEBI" id="CHEBI:29105"/>
    </cofactor>
    <text evidence="1">Binds 1 zinc ion per subunit.</text>
</comment>
<comment type="pathway">
    <text evidence="1">tRNA modification; tRNA-queuosine biosynthesis.</text>
</comment>
<comment type="subunit">
    <text evidence="1">Homodimer. Within each dimer, one monomer is responsible for RNA recognition and catalysis, while the other monomer binds to the replacement base PreQ1.</text>
</comment>
<comment type="similarity">
    <text evidence="1">Belongs to the queuine tRNA-ribosyltransferase family.</text>
</comment>
<organism>
    <name type="scientific">Staphylococcus aureus (strain COL)</name>
    <dbReference type="NCBI Taxonomy" id="93062"/>
    <lineage>
        <taxon>Bacteria</taxon>
        <taxon>Bacillati</taxon>
        <taxon>Bacillota</taxon>
        <taxon>Bacilli</taxon>
        <taxon>Bacillales</taxon>
        <taxon>Staphylococcaceae</taxon>
        <taxon>Staphylococcus</taxon>
    </lineage>
</organism>
<feature type="chain" id="PRO_0000135522" description="Queuine tRNA-ribosyltransferase">
    <location>
        <begin position="1"/>
        <end position="379"/>
    </location>
</feature>
<feature type="region of interest" description="RNA binding" evidence="1">
    <location>
        <begin position="249"/>
        <end position="255"/>
    </location>
</feature>
<feature type="region of interest" description="RNA binding; important for wobble base 34 recognition" evidence="1">
    <location>
        <begin position="273"/>
        <end position="277"/>
    </location>
</feature>
<feature type="active site" description="Proton acceptor" evidence="1">
    <location>
        <position position="94"/>
    </location>
</feature>
<feature type="active site" description="Nucleophile" evidence="1">
    <location>
        <position position="268"/>
    </location>
</feature>
<feature type="binding site" evidence="1">
    <location>
        <begin position="94"/>
        <end position="98"/>
    </location>
    <ligand>
        <name>substrate</name>
    </ligand>
</feature>
<feature type="binding site" evidence="1">
    <location>
        <position position="148"/>
    </location>
    <ligand>
        <name>substrate</name>
    </ligand>
</feature>
<feature type="binding site" evidence="1">
    <location>
        <position position="191"/>
    </location>
    <ligand>
        <name>substrate</name>
    </ligand>
</feature>
<feature type="binding site" evidence="1">
    <location>
        <position position="218"/>
    </location>
    <ligand>
        <name>substrate</name>
    </ligand>
</feature>
<feature type="binding site" evidence="1">
    <location>
        <position position="306"/>
    </location>
    <ligand>
        <name>Zn(2+)</name>
        <dbReference type="ChEBI" id="CHEBI:29105"/>
    </ligand>
</feature>
<feature type="binding site" evidence="1">
    <location>
        <position position="308"/>
    </location>
    <ligand>
        <name>Zn(2+)</name>
        <dbReference type="ChEBI" id="CHEBI:29105"/>
    </ligand>
</feature>
<feature type="binding site" evidence="1">
    <location>
        <position position="311"/>
    </location>
    <ligand>
        <name>Zn(2+)</name>
        <dbReference type="ChEBI" id="CHEBI:29105"/>
    </ligand>
</feature>
<feature type="binding site" evidence="1">
    <location>
        <position position="337"/>
    </location>
    <ligand>
        <name>Zn(2+)</name>
        <dbReference type="ChEBI" id="CHEBI:29105"/>
    </ligand>
</feature>
<dbReference type="EC" id="2.4.2.29" evidence="1"/>
<dbReference type="EMBL" id="CP000046">
    <property type="protein sequence ID" value="AAW36800.1"/>
    <property type="molecule type" value="Genomic_DNA"/>
</dbReference>
<dbReference type="RefSeq" id="WP_001112045.1">
    <property type="nucleotide sequence ID" value="NZ_JBGOFO010000003.1"/>
</dbReference>
<dbReference type="SMR" id="Q5HFC4"/>
<dbReference type="KEGG" id="sac:SACOL1694"/>
<dbReference type="HOGENOM" id="CLU_022060_0_1_9"/>
<dbReference type="UniPathway" id="UPA00392"/>
<dbReference type="Proteomes" id="UP000000530">
    <property type="component" value="Chromosome"/>
</dbReference>
<dbReference type="GO" id="GO:0005829">
    <property type="term" value="C:cytosol"/>
    <property type="evidence" value="ECO:0007669"/>
    <property type="project" value="TreeGrafter"/>
</dbReference>
<dbReference type="GO" id="GO:0046872">
    <property type="term" value="F:metal ion binding"/>
    <property type="evidence" value="ECO:0007669"/>
    <property type="project" value="UniProtKB-KW"/>
</dbReference>
<dbReference type="GO" id="GO:0008479">
    <property type="term" value="F:tRNA-guanosine(34) queuine transglycosylase activity"/>
    <property type="evidence" value="ECO:0007669"/>
    <property type="project" value="UniProtKB-UniRule"/>
</dbReference>
<dbReference type="GO" id="GO:0008616">
    <property type="term" value="P:queuosine biosynthetic process"/>
    <property type="evidence" value="ECO:0007669"/>
    <property type="project" value="UniProtKB-UniRule"/>
</dbReference>
<dbReference type="GO" id="GO:0002099">
    <property type="term" value="P:tRNA wobble guanine modification"/>
    <property type="evidence" value="ECO:0007669"/>
    <property type="project" value="TreeGrafter"/>
</dbReference>
<dbReference type="GO" id="GO:0101030">
    <property type="term" value="P:tRNA-guanine transglycosylation"/>
    <property type="evidence" value="ECO:0007669"/>
    <property type="project" value="InterPro"/>
</dbReference>
<dbReference type="FunFam" id="3.20.20.105:FF:000001">
    <property type="entry name" value="Queuine tRNA-ribosyltransferase"/>
    <property type="match status" value="1"/>
</dbReference>
<dbReference type="Gene3D" id="3.20.20.105">
    <property type="entry name" value="Queuine tRNA-ribosyltransferase-like"/>
    <property type="match status" value="1"/>
</dbReference>
<dbReference type="HAMAP" id="MF_00168">
    <property type="entry name" value="Q_tRNA_Tgt"/>
    <property type="match status" value="1"/>
</dbReference>
<dbReference type="InterPro" id="IPR050076">
    <property type="entry name" value="ArchSynthase1/Queuine_TRR"/>
</dbReference>
<dbReference type="InterPro" id="IPR004803">
    <property type="entry name" value="TGT"/>
</dbReference>
<dbReference type="InterPro" id="IPR036511">
    <property type="entry name" value="TGT-like_sf"/>
</dbReference>
<dbReference type="InterPro" id="IPR002616">
    <property type="entry name" value="tRNA_ribo_trans-like"/>
</dbReference>
<dbReference type="NCBIfam" id="TIGR00430">
    <property type="entry name" value="Q_tRNA_tgt"/>
    <property type="match status" value="1"/>
</dbReference>
<dbReference type="NCBIfam" id="TIGR00449">
    <property type="entry name" value="tgt_general"/>
    <property type="match status" value="1"/>
</dbReference>
<dbReference type="PANTHER" id="PTHR46499">
    <property type="entry name" value="QUEUINE TRNA-RIBOSYLTRANSFERASE"/>
    <property type="match status" value="1"/>
</dbReference>
<dbReference type="PANTHER" id="PTHR46499:SF1">
    <property type="entry name" value="QUEUINE TRNA-RIBOSYLTRANSFERASE"/>
    <property type="match status" value="1"/>
</dbReference>
<dbReference type="Pfam" id="PF01702">
    <property type="entry name" value="TGT"/>
    <property type="match status" value="1"/>
</dbReference>
<dbReference type="SUPFAM" id="SSF51713">
    <property type="entry name" value="tRNA-guanine transglycosylase"/>
    <property type="match status" value="1"/>
</dbReference>
<evidence type="ECO:0000255" key="1">
    <source>
        <dbReference type="HAMAP-Rule" id="MF_00168"/>
    </source>
</evidence>
<reference key="1">
    <citation type="journal article" date="2005" name="J. Bacteriol.">
        <title>Insights on evolution of virulence and resistance from the complete genome analysis of an early methicillin-resistant Staphylococcus aureus strain and a biofilm-producing methicillin-resistant Staphylococcus epidermidis strain.</title>
        <authorList>
            <person name="Gill S.R."/>
            <person name="Fouts D.E."/>
            <person name="Archer G.L."/>
            <person name="Mongodin E.F."/>
            <person name="DeBoy R.T."/>
            <person name="Ravel J."/>
            <person name="Paulsen I.T."/>
            <person name="Kolonay J.F."/>
            <person name="Brinkac L.M."/>
            <person name="Beanan M.J."/>
            <person name="Dodson R.J."/>
            <person name="Daugherty S.C."/>
            <person name="Madupu R."/>
            <person name="Angiuoli S.V."/>
            <person name="Durkin A.S."/>
            <person name="Haft D.H."/>
            <person name="Vamathevan J.J."/>
            <person name="Khouri H."/>
            <person name="Utterback T.R."/>
            <person name="Lee C."/>
            <person name="Dimitrov G."/>
            <person name="Jiang L."/>
            <person name="Qin H."/>
            <person name="Weidman J."/>
            <person name="Tran K."/>
            <person name="Kang K.H."/>
            <person name="Hance I.R."/>
            <person name="Nelson K.E."/>
            <person name="Fraser C.M."/>
        </authorList>
    </citation>
    <scope>NUCLEOTIDE SEQUENCE [LARGE SCALE GENOMIC DNA]</scope>
    <source>
        <strain>COL</strain>
    </source>
</reference>
<keyword id="KW-0328">Glycosyltransferase</keyword>
<keyword id="KW-0479">Metal-binding</keyword>
<keyword id="KW-0671">Queuosine biosynthesis</keyword>
<keyword id="KW-0808">Transferase</keyword>
<keyword id="KW-0819">tRNA processing</keyword>
<keyword id="KW-0862">Zinc</keyword>